<name>RL15_RICCN</name>
<gene>
    <name evidence="1" type="primary">rplO</name>
    <name type="ordered locus">RC0987</name>
</gene>
<proteinExistence type="inferred from homology"/>
<accession>Q92GY5</accession>
<dbReference type="EMBL" id="AE006914">
    <property type="protein sequence ID" value="AAL03525.1"/>
    <property type="molecule type" value="Genomic_DNA"/>
</dbReference>
<dbReference type="PIR" id="C97823">
    <property type="entry name" value="C97823"/>
</dbReference>
<dbReference type="RefSeq" id="WP_004997829.1">
    <property type="nucleotide sequence ID" value="NC_003103.1"/>
</dbReference>
<dbReference type="SMR" id="Q92GY5"/>
<dbReference type="GeneID" id="95361467"/>
<dbReference type="KEGG" id="rco:RC0987"/>
<dbReference type="HOGENOM" id="CLU_055188_4_0_5"/>
<dbReference type="Proteomes" id="UP000000816">
    <property type="component" value="Chromosome"/>
</dbReference>
<dbReference type="GO" id="GO:0015934">
    <property type="term" value="C:large ribosomal subunit"/>
    <property type="evidence" value="ECO:0007669"/>
    <property type="project" value="InterPro"/>
</dbReference>
<dbReference type="GO" id="GO:0019843">
    <property type="term" value="F:rRNA binding"/>
    <property type="evidence" value="ECO:0007669"/>
    <property type="project" value="UniProtKB-UniRule"/>
</dbReference>
<dbReference type="GO" id="GO:0003735">
    <property type="term" value="F:structural constituent of ribosome"/>
    <property type="evidence" value="ECO:0007669"/>
    <property type="project" value="InterPro"/>
</dbReference>
<dbReference type="GO" id="GO:0006412">
    <property type="term" value="P:translation"/>
    <property type="evidence" value="ECO:0007669"/>
    <property type="project" value="UniProtKB-UniRule"/>
</dbReference>
<dbReference type="Gene3D" id="3.100.10.10">
    <property type="match status" value="1"/>
</dbReference>
<dbReference type="HAMAP" id="MF_01341">
    <property type="entry name" value="Ribosomal_uL15"/>
    <property type="match status" value="1"/>
</dbReference>
<dbReference type="InterPro" id="IPR030878">
    <property type="entry name" value="Ribosomal_uL15"/>
</dbReference>
<dbReference type="InterPro" id="IPR021131">
    <property type="entry name" value="Ribosomal_uL15/eL18"/>
</dbReference>
<dbReference type="InterPro" id="IPR036227">
    <property type="entry name" value="Ribosomal_uL15/eL18_sf"/>
</dbReference>
<dbReference type="InterPro" id="IPR005749">
    <property type="entry name" value="Ribosomal_uL15_bac-type"/>
</dbReference>
<dbReference type="NCBIfam" id="TIGR01071">
    <property type="entry name" value="rplO_bact"/>
    <property type="match status" value="1"/>
</dbReference>
<dbReference type="PANTHER" id="PTHR12934">
    <property type="entry name" value="50S RIBOSOMAL PROTEIN L15"/>
    <property type="match status" value="1"/>
</dbReference>
<dbReference type="PANTHER" id="PTHR12934:SF11">
    <property type="entry name" value="LARGE RIBOSOMAL SUBUNIT PROTEIN UL15M"/>
    <property type="match status" value="1"/>
</dbReference>
<dbReference type="Pfam" id="PF00828">
    <property type="entry name" value="Ribosomal_L27A"/>
    <property type="match status" value="1"/>
</dbReference>
<dbReference type="SUPFAM" id="SSF52080">
    <property type="entry name" value="Ribosomal proteins L15p and L18e"/>
    <property type="match status" value="1"/>
</dbReference>
<comment type="function">
    <text evidence="1">Binds to the 23S rRNA.</text>
</comment>
<comment type="subunit">
    <text evidence="1">Part of the 50S ribosomal subunit.</text>
</comment>
<comment type="similarity">
    <text evidence="1">Belongs to the universal ribosomal protein uL15 family.</text>
</comment>
<feature type="chain" id="PRO_0000104795" description="Large ribosomal subunit protein uL15">
    <location>
        <begin position="1"/>
        <end position="153"/>
    </location>
</feature>
<feature type="region of interest" description="Disordered" evidence="2">
    <location>
        <begin position="21"/>
        <end position="41"/>
    </location>
</feature>
<feature type="compositionally biased region" description="Gly residues" evidence="2">
    <location>
        <begin position="23"/>
        <end position="35"/>
    </location>
</feature>
<evidence type="ECO:0000255" key="1">
    <source>
        <dbReference type="HAMAP-Rule" id="MF_01341"/>
    </source>
</evidence>
<evidence type="ECO:0000256" key="2">
    <source>
        <dbReference type="SAM" id="MobiDB-lite"/>
    </source>
</evidence>
<evidence type="ECO:0000305" key="3"/>
<reference key="1">
    <citation type="journal article" date="2001" name="Science">
        <title>Mechanisms of evolution in Rickettsia conorii and R. prowazekii.</title>
        <authorList>
            <person name="Ogata H."/>
            <person name="Audic S."/>
            <person name="Renesto-Audiffren P."/>
            <person name="Fournier P.-E."/>
            <person name="Barbe V."/>
            <person name="Samson D."/>
            <person name="Roux V."/>
            <person name="Cossart P."/>
            <person name="Weissenbach J."/>
            <person name="Claverie J.-M."/>
            <person name="Raoult D."/>
        </authorList>
    </citation>
    <scope>NUCLEOTIDE SEQUENCE [LARGE SCALE GENOMIC DNA]</scope>
    <source>
        <strain>ATCC VR-613 / Malish 7</strain>
    </source>
</reference>
<protein>
    <recommendedName>
        <fullName evidence="1">Large ribosomal subunit protein uL15</fullName>
    </recommendedName>
    <alternativeName>
        <fullName evidence="3">50S ribosomal protein L15</fullName>
    </alternativeName>
</protein>
<sequence>MKLNELYNNIGAKKNKKRIARGIGSGKGKTGGRGIKGQKSRSGVAIKGFEGGQTPIIKRLPKRGFNCISTKKYNIINIYNIEEALADGRLSADDNITKEKLVEARVVNNKNNKKLVKLLSICSDDFAAPLSLKLDAYSSKAKDLIEKAGGKLL</sequence>
<organism>
    <name type="scientific">Rickettsia conorii (strain ATCC VR-613 / Malish 7)</name>
    <dbReference type="NCBI Taxonomy" id="272944"/>
    <lineage>
        <taxon>Bacteria</taxon>
        <taxon>Pseudomonadati</taxon>
        <taxon>Pseudomonadota</taxon>
        <taxon>Alphaproteobacteria</taxon>
        <taxon>Rickettsiales</taxon>
        <taxon>Rickettsiaceae</taxon>
        <taxon>Rickettsieae</taxon>
        <taxon>Rickettsia</taxon>
        <taxon>spotted fever group</taxon>
    </lineage>
</organism>
<keyword id="KW-0687">Ribonucleoprotein</keyword>
<keyword id="KW-0689">Ribosomal protein</keyword>
<keyword id="KW-0694">RNA-binding</keyword>
<keyword id="KW-0699">rRNA-binding</keyword>